<comment type="function">
    <text evidence="1">Na(+)/H(+) antiporter that extrudes sodium in exchange for external protons.</text>
</comment>
<comment type="catalytic activity">
    <reaction evidence="1">
        <text>Na(+)(in) + 2 H(+)(out) = Na(+)(out) + 2 H(+)(in)</text>
        <dbReference type="Rhea" id="RHEA:29251"/>
        <dbReference type="ChEBI" id="CHEBI:15378"/>
        <dbReference type="ChEBI" id="CHEBI:29101"/>
    </reaction>
    <physiologicalReaction direction="left-to-right" evidence="1">
        <dbReference type="Rhea" id="RHEA:29252"/>
    </physiologicalReaction>
</comment>
<comment type="subcellular location">
    <subcellularLocation>
        <location evidence="1">Cell inner membrane</location>
        <topology evidence="1">Multi-pass membrane protein</topology>
    </subcellularLocation>
</comment>
<comment type="similarity">
    <text evidence="1">Belongs to the NhaA Na(+)/H(+) (TC 2.A.33) antiporter family.</text>
</comment>
<proteinExistence type="inferred from homology"/>
<keyword id="KW-0050">Antiport</keyword>
<keyword id="KW-0997">Cell inner membrane</keyword>
<keyword id="KW-1003">Cell membrane</keyword>
<keyword id="KW-0406">Ion transport</keyword>
<keyword id="KW-0472">Membrane</keyword>
<keyword id="KW-1185">Reference proteome</keyword>
<keyword id="KW-0915">Sodium</keyword>
<keyword id="KW-0739">Sodium transport</keyword>
<keyword id="KW-0812">Transmembrane</keyword>
<keyword id="KW-1133">Transmembrane helix</keyword>
<keyword id="KW-0813">Transport</keyword>
<evidence type="ECO:0000255" key="1">
    <source>
        <dbReference type="HAMAP-Rule" id="MF_01844"/>
    </source>
</evidence>
<reference key="1">
    <citation type="journal article" date="2007" name="Nat. Biotechnol.">
        <title>Complete genome sequence of the myxobacterium Sorangium cellulosum.</title>
        <authorList>
            <person name="Schneiker S."/>
            <person name="Perlova O."/>
            <person name="Kaiser O."/>
            <person name="Gerth K."/>
            <person name="Alici A."/>
            <person name="Altmeyer M.O."/>
            <person name="Bartels D."/>
            <person name="Bekel T."/>
            <person name="Beyer S."/>
            <person name="Bode E."/>
            <person name="Bode H.B."/>
            <person name="Bolten C.J."/>
            <person name="Choudhuri J.V."/>
            <person name="Doss S."/>
            <person name="Elnakady Y.A."/>
            <person name="Frank B."/>
            <person name="Gaigalat L."/>
            <person name="Goesmann A."/>
            <person name="Groeger C."/>
            <person name="Gross F."/>
            <person name="Jelsbak L."/>
            <person name="Jelsbak L."/>
            <person name="Kalinowski J."/>
            <person name="Kegler C."/>
            <person name="Knauber T."/>
            <person name="Konietzny S."/>
            <person name="Kopp M."/>
            <person name="Krause L."/>
            <person name="Krug D."/>
            <person name="Linke B."/>
            <person name="Mahmud T."/>
            <person name="Martinez-Arias R."/>
            <person name="McHardy A.C."/>
            <person name="Merai M."/>
            <person name="Meyer F."/>
            <person name="Mormann S."/>
            <person name="Munoz-Dorado J."/>
            <person name="Perez J."/>
            <person name="Pradella S."/>
            <person name="Rachid S."/>
            <person name="Raddatz G."/>
            <person name="Rosenau F."/>
            <person name="Rueckert C."/>
            <person name="Sasse F."/>
            <person name="Scharfe M."/>
            <person name="Schuster S.C."/>
            <person name="Suen G."/>
            <person name="Treuner-Lange A."/>
            <person name="Velicer G.J."/>
            <person name="Vorholter F.-J."/>
            <person name="Weissman K.J."/>
            <person name="Welch R.D."/>
            <person name="Wenzel S.C."/>
            <person name="Whitworth D.E."/>
            <person name="Wilhelm S."/>
            <person name="Wittmann C."/>
            <person name="Bloecker H."/>
            <person name="Puehler A."/>
            <person name="Mueller R."/>
        </authorList>
    </citation>
    <scope>NUCLEOTIDE SEQUENCE [LARGE SCALE GENOMIC DNA]</scope>
    <source>
        <strain>So ce56</strain>
    </source>
</reference>
<accession>A9EYV6</accession>
<protein>
    <recommendedName>
        <fullName evidence="1">Na(+)/H(+) antiporter NhaA 2</fullName>
    </recommendedName>
    <alternativeName>
        <fullName evidence="1">Sodium/proton antiporter NhaA 2</fullName>
    </alternativeName>
</protein>
<organism>
    <name type="scientific">Sorangium cellulosum (strain So ce56)</name>
    <name type="common">Polyangium cellulosum (strain So ce56)</name>
    <dbReference type="NCBI Taxonomy" id="448385"/>
    <lineage>
        <taxon>Bacteria</taxon>
        <taxon>Pseudomonadati</taxon>
        <taxon>Myxococcota</taxon>
        <taxon>Polyangia</taxon>
        <taxon>Polyangiales</taxon>
        <taxon>Polyangiaceae</taxon>
        <taxon>Sorangium</taxon>
    </lineage>
</organism>
<name>NHAA2_SORC5</name>
<feature type="chain" id="PRO_0000334442" description="Na(+)/H(+) antiporter NhaA 2">
    <location>
        <begin position="1"/>
        <end position="468"/>
    </location>
</feature>
<feature type="transmembrane region" description="Helical" evidence="1">
    <location>
        <begin position="31"/>
        <end position="51"/>
    </location>
</feature>
<feature type="transmembrane region" description="Helical" evidence="1">
    <location>
        <begin position="82"/>
        <end position="102"/>
    </location>
</feature>
<feature type="transmembrane region" description="Helical" evidence="1">
    <location>
        <begin position="118"/>
        <end position="138"/>
    </location>
</feature>
<feature type="transmembrane region" description="Helical" evidence="1">
    <location>
        <begin position="147"/>
        <end position="167"/>
    </location>
</feature>
<feature type="transmembrane region" description="Helical" evidence="1">
    <location>
        <begin position="176"/>
        <end position="196"/>
    </location>
</feature>
<feature type="transmembrane region" description="Helical" evidence="1">
    <location>
        <begin position="199"/>
        <end position="219"/>
    </location>
</feature>
<feature type="transmembrane region" description="Helical" evidence="1">
    <location>
        <begin position="226"/>
        <end position="246"/>
    </location>
</feature>
<feature type="transmembrane region" description="Helical" evidence="1">
    <location>
        <begin position="321"/>
        <end position="341"/>
    </location>
</feature>
<feature type="transmembrane region" description="Helical" evidence="1">
    <location>
        <begin position="353"/>
        <end position="373"/>
    </location>
</feature>
<feature type="transmembrane region" description="Helical" evidence="1">
    <location>
        <begin position="393"/>
        <end position="413"/>
    </location>
</feature>
<feature type="transmembrane region" description="Helical" evidence="1">
    <location>
        <begin position="422"/>
        <end position="442"/>
    </location>
</feature>
<dbReference type="EMBL" id="AM746676">
    <property type="protein sequence ID" value="CAN97578.1"/>
    <property type="molecule type" value="Genomic_DNA"/>
</dbReference>
<dbReference type="RefSeq" id="WP_012240017.1">
    <property type="nucleotide sequence ID" value="NC_010162.1"/>
</dbReference>
<dbReference type="SMR" id="A9EYV6"/>
<dbReference type="STRING" id="448385.sce7409"/>
<dbReference type="KEGG" id="scl:sce7409"/>
<dbReference type="eggNOG" id="COG3004">
    <property type="taxonomic scope" value="Bacteria"/>
</dbReference>
<dbReference type="HOGENOM" id="CLU_015803_1_2_7"/>
<dbReference type="OrthoDB" id="9808135at2"/>
<dbReference type="BioCyc" id="SCEL448385:SCE_RS37945-MONOMER"/>
<dbReference type="Proteomes" id="UP000002139">
    <property type="component" value="Chromosome"/>
</dbReference>
<dbReference type="GO" id="GO:0005886">
    <property type="term" value="C:plasma membrane"/>
    <property type="evidence" value="ECO:0007669"/>
    <property type="project" value="UniProtKB-SubCell"/>
</dbReference>
<dbReference type="GO" id="GO:0015385">
    <property type="term" value="F:sodium:proton antiporter activity"/>
    <property type="evidence" value="ECO:0007669"/>
    <property type="project" value="TreeGrafter"/>
</dbReference>
<dbReference type="GO" id="GO:0006885">
    <property type="term" value="P:regulation of pH"/>
    <property type="evidence" value="ECO:0007669"/>
    <property type="project" value="InterPro"/>
</dbReference>
<dbReference type="Gene3D" id="1.20.1530.10">
    <property type="entry name" value="Na+/H+ antiporter like domain"/>
    <property type="match status" value="1"/>
</dbReference>
<dbReference type="HAMAP" id="MF_01844">
    <property type="entry name" value="NhaA"/>
    <property type="match status" value="1"/>
</dbReference>
<dbReference type="InterPro" id="IPR023171">
    <property type="entry name" value="Na/H_antiporter_dom_sf"/>
</dbReference>
<dbReference type="InterPro" id="IPR004670">
    <property type="entry name" value="NhaA"/>
</dbReference>
<dbReference type="NCBIfam" id="TIGR00773">
    <property type="entry name" value="NhaA"/>
    <property type="match status" value="1"/>
</dbReference>
<dbReference type="PANTHER" id="PTHR30341:SF0">
    <property type="entry name" value="NA(+)_H(+) ANTIPORTER NHAA"/>
    <property type="match status" value="1"/>
</dbReference>
<dbReference type="PANTHER" id="PTHR30341">
    <property type="entry name" value="SODIUM ION/PROTON ANTIPORTER NHAA-RELATED"/>
    <property type="match status" value="1"/>
</dbReference>
<dbReference type="Pfam" id="PF06965">
    <property type="entry name" value="Na_H_antiport_1"/>
    <property type="match status" value="1"/>
</dbReference>
<gene>
    <name evidence="1" type="primary">nhaA2</name>
    <name type="ordered locus">sce7409</name>
</gene>
<sequence length="468" mass="49049">MGTSDLRNAPPGTWLPARRLARWIFQPLERFLHVQAASGIVLLIATAVALAWANSPWAASYERLWHTPVRLGVGSYLVERDLHFWINDGLMTIFFFVVGLEIRREIHQGELSVLKRAVLPVAAALGGMLFPALIYLALNPSPPERSGWGVPMATDIAFAVGALALLGNRVPAALRVLLLALAIIDDIGAILVIAVFYSSSISVTGFGLVAVGIAGVLALQRFGVRSPVVYAAAGVVIWAGLLSAGVHPTITGVLLGLLTPVHPWFGEEGFLAEARRALEDFQERATGGHDARELTGPLAQLSQARREALPPVVRLEAALHPWVAYGIMPLFALANAGVSLGDVHLGAAGSTRLLLGVVFGLTMGKPLGIMVACSLSVKLGLAALPRGVLWRGVLVVGCVAGIGFTMAIFVAGLAFGAGQRLGVAKLAVLLGSLISALVAMAVGRLVLRPAEAGQIAATADEAEASTEY</sequence>